<evidence type="ECO:0000250" key="1"/>
<evidence type="ECO:0000250" key="2">
    <source>
        <dbReference type="UniProtKB" id="P15882"/>
    </source>
</evidence>
<evidence type="ECO:0000250" key="3">
    <source>
        <dbReference type="UniProtKB" id="P30337"/>
    </source>
</evidence>
<evidence type="ECO:0000255" key="4">
    <source>
        <dbReference type="PROSITE-ProRule" id="PRU00172"/>
    </source>
</evidence>
<evidence type="ECO:0000255" key="5">
    <source>
        <dbReference type="PROSITE-ProRule" id="PRU00226"/>
    </source>
</evidence>
<evidence type="ECO:0000256" key="6">
    <source>
        <dbReference type="SAM" id="MobiDB-lite"/>
    </source>
</evidence>
<feature type="chain" id="PRO_0000248046" description="N-chimaerin">
    <location>
        <begin position="1"/>
        <end position="334"/>
    </location>
</feature>
<feature type="domain" description="Rho-GAP" evidence="4">
    <location>
        <begin position="143"/>
        <end position="334"/>
    </location>
</feature>
<feature type="zinc finger region" description="Phorbol-ester/DAG-type" evidence="5">
    <location>
        <begin position="80"/>
        <end position="130"/>
    </location>
</feature>
<feature type="region of interest" description="Disordered" evidence="6">
    <location>
        <begin position="1"/>
        <end position="22"/>
    </location>
</feature>
<feature type="compositionally biased region" description="Polar residues" evidence="6">
    <location>
        <begin position="1"/>
        <end position="10"/>
    </location>
</feature>
<feature type="site" description="Arginine finger; crucial for GTP hydrolysis by stabilizing the transition state" evidence="4">
    <location>
        <position position="179"/>
    </location>
</feature>
<feature type="modified residue" description="Phosphothreonine" evidence="2">
    <location>
        <position position="67"/>
    </location>
</feature>
<feature type="modified residue" description="Phosphothreonine" evidence="3">
    <location>
        <position position="215"/>
    </location>
</feature>
<reference key="1">
    <citation type="submission" date="2006-06" db="EMBL/GenBank/DDBJ databases">
        <authorList>
            <consortium name="NIH - Mammalian Gene Collection (MGC) project"/>
        </authorList>
    </citation>
    <scope>NUCLEOTIDE SEQUENCE [LARGE SCALE MRNA]</scope>
    <source>
        <strain>Hereford</strain>
        <tissue>Basal ganglia</tissue>
    </source>
</reference>
<name>CHIN_BOVIN</name>
<protein>
    <recommendedName>
        <fullName>N-chimaerin</fullName>
    </recommendedName>
    <alternativeName>
        <fullName>A-chimaerin</fullName>
    </alternativeName>
    <alternativeName>
        <fullName>Alpha-chimerin</fullName>
    </alternativeName>
    <alternativeName>
        <fullName>N-chimerin</fullName>
        <shortName>NC</shortName>
    </alternativeName>
    <alternativeName>
        <fullName>Rho GTPase-activating protein 2</fullName>
    </alternativeName>
</protein>
<dbReference type="EMBL" id="BC118265">
    <property type="protein sequence ID" value="AAI18266.1"/>
    <property type="molecule type" value="mRNA"/>
</dbReference>
<dbReference type="RefSeq" id="NP_001068817.1">
    <property type="nucleotide sequence ID" value="NM_001075349.1"/>
</dbReference>
<dbReference type="SMR" id="Q17QN0"/>
<dbReference type="FunCoup" id="Q17QN0">
    <property type="interactions" value="187"/>
</dbReference>
<dbReference type="STRING" id="9913.ENSBTAP00000067534"/>
<dbReference type="PaxDb" id="9913-ENSBTAP00000010556"/>
<dbReference type="GeneID" id="508266"/>
<dbReference type="KEGG" id="bta:508266"/>
<dbReference type="CTD" id="1123"/>
<dbReference type="eggNOG" id="KOG1453">
    <property type="taxonomic scope" value="Eukaryota"/>
</dbReference>
<dbReference type="InParanoid" id="Q17QN0"/>
<dbReference type="OrthoDB" id="3196451at2759"/>
<dbReference type="Proteomes" id="UP000009136">
    <property type="component" value="Unplaced"/>
</dbReference>
<dbReference type="GO" id="GO:0005096">
    <property type="term" value="F:GTPase activator activity"/>
    <property type="evidence" value="ECO:0000318"/>
    <property type="project" value="GO_Central"/>
</dbReference>
<dbReference type="GO" id="GO:0008270">
    <property type="term" value="F:zinc ion binding"/>
    <property type="evidence" value="ECO:0007669"/>
    <property type="project" value="UniProtKB-KW"/>
</dbReference>
<dbReference type="GO" id="GO:0048013">
    <property type="term" value="P:ephrin receptor signaling pathway"/>
    <property type="evidence" value="ECO:0000250"/>
    <property type="project" value="UniProtKB"/>
</dbReference>
<dbReference type="GO" id="GO:0008045">
    <property type="term" value="P:motor neuron axon guidance"/>
    <property type="evidence" value="ECO:0000250"/>
    <property type="project" value="UniProtKB"/>
</dbReference>
<dbReference type="GO" id="GO:0050770">
    <property type="term" value="P:regulation of axonogenesis"/>
    <property type="evidence" value="ECO:0000250"/>
    <property type="project" value="UniProtKB"/>
</dbReference>
<dbReference type="CDD" id="cd04372">
    <property type="entry name" value="RhoGAP_chimaerin"/>
    <property type="match status" value="1"/>
</dbReference>
<dbReference type="FunFam" id="1.10.555.10:FF:000005">
    <property type="entry name" value="Chimaerin"/>
    <property type="match status" value="1"/>
</dbReference>
<dbReference type="FunFam" id="3.30.60.20:FF:000030">
    <property type="entry name" value="Chimaerin"/>
    <property type="match status" value="1"/>
</dbReference>
<dbReference type="Gene3D" id="3.30.60.20">
    <property type="match status" value="1"/>
</dbReference>
<dbReference type="Gene3D" id="1.10.555.10">
    <property type="entry name" value="Rho GTPase activation protein"/>
    <property type="match status" value="1"/>
</dbReference>
<dbReference type="InterPro" id="IPR046349">
    <property type="entry name" value="C1-like_sf"/>
</dbReference>
<dbReference type="InterPro" id="IPR020454">
    <property type="entry name" value="DAG/PE-bd"/>
</dbReference>
<dbReference type="InterPro" id="IPR002219">
    <property type="entry name" value="PE/DAG-bd"/>
</dbReference>
<dbReference type="InterPro" id="IPR051854">
    <property type="entry name" value="Rho-type_GAP"/>
</dbReference>
<dbReference type="InterPro" id="IPR008936">
    <property type="entry name" value="Rho_GTPase_activation_prot"/>
</dbReference>
<dbReference type="InterPro" id="IPR037860">
    <property type="entry name" value="RhoGAP_chimaerin"/>
</dbReference>
<dbReference type="InterPro" id="IPR000198">
    <property type="entry name" value="RhoGAP_dom"/>
</dbReference>
<dbReference type="PANTHER" id="PTHR46075">
    <property type="entry name" value="CHIMERIN FAMILY MEMBER"/>
    <property type="match status" value="1"/>
</dbReference>
<dbReference type="PANTHER" id="PTHR46075:SF6">
    <property type="entry name" value="N-CHIMAERIN"/>
    <property type="match status" value="1"/>
</dbReference>
<dbReference type="Pfam" id="PF00130">
    <property type="entry name" value="C1_1"/>
    <property type="match status" value="1"/>
</dbReference>
<dbReference type="Pfam" id="PF00620">
    <property type="entry name" value="RhoGAP"/>
    <property type="match status" value="1"/>
</dbReference>
<dbReference type="PRINTS" id="PR00008">
    <property type="entry name" value="DAGPEDOMAIN"/>
</dbReference>
<dbReference type="SMART" id="SM00109">
    <property type="entry name" value="C1"/>
    <property type="match status" value="1"/>
</dbReference>
<dbReference type="SMART" id="SM00324">
    <property type="entry name" value="RhoGAP"/>
    <property type="match status" value="1"/>
</dbReference>
<dbReference type="SUPFAM" id="SSF57889">
    <property type="entry name" value="Cysteine-rich domain"/>
    <property type="match status" value="1"/>
</dbReference>
<dbReference type="SUPFAM" id="SSF48350">
    <property type="entry name" value="GTPase activation domain, GAP"/>
    <property type="match status" value="1"/>
</dbReference>
<dbReference type="PROSITE" id="PS50238">
    <property type="entry name" value="RHOGAP"/>
    <property type="match status" value="1"/>
</dbReference>
<dbReference type="PROSITE" id="PS00479">
    <property type="entry name" value="ZF_DAG_PE_1"/>
    <property type="match status" value="1"/>
</dbReference>
<dbReference type="PROSITE" id="PS50081">
    <property type="entry name" value="ZF_DAG_PE_2"/>
    <property type="match status" value="1"/>
</dbReference>
<comment type="function">
    <text evidence="1">GTPase-activating protein for p21-rac and a phorbol ester receptor. Involved in the assembly of neuronal locomotor circuits as a direct effector of EPHA4 in axon guidance (By similarity).</text>
</comment>
<comment type="subunit">
    <text evidence="1">Interacts with EPHA4; effector of EPHA4 in axon guidance linking EPHA4 activation to RAC1 regulation.</text>
</comment>
<comment type="PTM">
    <text evidence="1">Phosphorylated. Phosphorylation is EPHA4 kinase activity-dependent (By similarity).</text>
</comment>
<sequence>MPSKESWSGRKTNRATVHKSKQEGRQQDLLIAALGMKLGSQKSSVTIWQPLKLFAYSQLTSLVRRATLKENEQIPKYEKVHNFKVHTFRGPHWCEYCANFMWGLIAQGVKCADCGLNVHKQCSKMVPNDCKPDLKHVKKVYSCDLTTLVKARTTKRPMVVDMCIREIEARGLNSEGLYRVSGFSDLIEDVKMAFDRDGEKADISVNMYEDINIITGALKLYFRDLPIPLITYDAYPKFIESAKIMDPDEQLETLHEALKLLPPAHCETLRYLMAHLKRVTLHEKENLMNAENLGIVFGPTLMRSPELDAMAALNDIRYQRLVVELLIKNEDILF</sequence>
<proteinExistence type="evidence at transcript level"/>
<keyword id="KW-0343">GTPase activation</keyword>
<keyword id="KW-0479">Metal-binding</keyword>
<keyword id="KW-0524">Neurogenesis</keyword>
<keyword id="KW-0597">Phosphoprotein</keyword>
<keyword id="KW-1185">Reference proteome</keyword>
<keyword id="KW-0862">Zinc</keyword>
<keyword id="KW-0863">Zinc-finger</keyword>
<organism>
    <name type="scientific">Bos taurus</name>
    <name type="common">Bovine</name>
    <dbReference type="NCBI Taxonomy" id="9913"/>
    <lineage>
        <taxon>Eukaryota</taxon>
        <taxon>Metazoa</taxon>
        <taxon>Chordata</taxon>
        <taxon>Craniata</taxon>
        <taxon>Vertebrata</taxon>
        <taxon>Euteleostomi</taxon>
        <taxon>Mammalia</taxon>
        <taxon>Eutheria</taxon>
        <taxon>Laurasiatheria</taxon>
        <taxon>Artiodactyla</taxon>
        <taxon>Ruminantia</taxon>
        <taxon>Pecora</taxon>
        <taxon>Bovidae</taxon>
        <taxon>Bovinae</taxon>
        <taxon>Bos</taxon>
    </lineage>
</organism>
<accession>Q17QN0</accession>
<gene>
    <name type="primary">CHN1</name>
    <name type="synonym">ARHGAP2</name>
    <name type="synonym">CHN</name>
</gene>